<gene>
    <name evidence="1" type="primary">gatD</name>
    <name type="ordered locus">LS215_1376</name>
</gene>
<name>GATD_SACI2</name>
<comment type="function">
    <text evidence="1">Allows the formation of correctly charged Gln-tRNA(Gln) through the transamidation of misacylated Glu-tRNA(Gln) in organisms which lack glutaminyl-tRNA synthetase. The reaction takes place in the presence of glutamine and ATP through an activated gamma-phospho-Glu-tRNA(Gln). The GatDE system is specific for glutamate and does not act on aspartate.</text>
</comment>
<comment type="catalytic activity">
    <reaction evidence="1">
        <text>L-glutamyl-tRNA(Gln) + L-glutamine + ATP + H2O = L-glutaminyl-tRNA(Gln) + L-glutamate + ADP + phosphate + H(+)</text>
        <dbReference type="Rhea" id="RHEA:17521"/>
        <dbReference type="Rhea" id="RHEA-COMP:9681"/>
        <dbReference type="Rhea" id="RHEA-COMP:9684"/>
        <dbReference type="ChEBI" id="CHEBI:15377"/>
        <dbReference type="ChEBI" id="CHEBI:15378"/>
        <dbReference type="ChEBI" id="CHEBI:29985"/>
        <dbReference type="ChEBI" id="CHEBI:30616"/>
        <dbReference type="ChEBI" id="CHEBI:43474"/>
        <dbReference type="ChEBI" id="CHEBI:58359"/>
        <dbReference type="ChEBI" id="CHEBI:78520"/>
        <dbReference type="ChEBI" id="CHEBI:78521"/>
        <dbReference type="ChEBI" id="CHEBI:456216"/>
    </reaction>
</comment>
<comment type="subunit">
    <text evidence="1">Heterodimer of GatD and GatE.</text>
</comment>
<comment type="similarity">
    <text evidence="1">Belongs to the asparaginase 1 family. GatD subfamily.</text>
</comment>
<reference key="1">
    <citation type="journal article" date="2009" name="Proc. Natl. Acad. Sci. U.S.A.">
        <title>Biogeography of the Sulfolobus islandicus pan-genome.</title>
        <authorList>
            <person name="Reno M.L."/>
            <person name="Held N.L."/>
            <person name="Fields C.J."/>
            <person name="Burke P.V."/>
            <person name="Whitaker R.J."/>
        </authorList>
    </citation>
    <scope>NUCLEOTIDE SEQUENCE [LARGE SCALE GENOMIC DNA]</scope>
    <source>
        <strain>L.S.2.15 / Lassen #1</strain>
    </source>
</reference>
<accession>C3MPS1</accession>
<proteinExistence type="inferred from homology"/>
<dbReference type="EC" id="6.3.5.-" evidence="1"/>
<dbReference type="EMBL" id="CP001399">
    <property type="protein sequence ID" value="ACP35384.1"/>
    <property type="molecule type" value="Genomic_DNA"/>
</dbReference>
<dbReference type="RefSeq" id="WP_012713667.1">
    <property type="nucleotide sequence ID" value="NC_012589.1"/>
</dbReference>
<dbReference type="SMR" id="C3MPS1"/>
<dbReference type="GeneID" id="7797892"/>
<dbReference type="KEGG" id="sis:LS215_1376"/>
<dbReference type="HOGENOM" id="CLU_019134_2_1_2"/>
<dbReference type="OrthoDB" id="371959at2157"/>
<dbReference type="Proteomes" id="UP000001747">
    <property type="component" value="Chromosome"/>
</dbReference>
<dbReference type="GO" id="GO:0004067">
    <property type="term" value="F:asparaginase activity"/>
    <property type="evidence" value="ECO:0007669"/>
    <property type="project" value="InterPro"/>
</dbReference>
<dbReference type="GO" id="GO:0005524">
    <property type="term" value="F:ATP binding"/>
    <property type="evidence" value="ECO:0007669"/>
    <property type="project" value="UniProtKB-KW"/>
</dbReference>
<dbReference type="GO" id="GO:0050567">
    <property type="term" value="F:glutaminyl-tRNA synthase (glutamine-hydrolyzing) activity"/>
    <property type="evidence" value="ECO:0007669"/>
    <property type="project" value="UniProtKB-UniRule"/>
</dbReference>
<dbReference type="GO" id="GO:0006520">
    <property type="term" value="P:amino acid metabolic process"/>
    <property type="evidence" value="ECO:0007669"/>
    <property type="project" value="InterPro"/>
</dbReference>
<dbReference type="GO" id="GO:0006450">
    <property type="term" value="P:regulation of translational fidelity"/>
    <property type="evidence" value="ECO:0007669"/>
    <property type="project" value="InterPro"/>
</dbReference>
<dbReference type="GO" id="GO:0006412">
    <property type="term" value="P:translation"/>
    <property type="evidence" value="ECO:0007669"/>
    <property type="project" value="UniProtKB-UniRule"/>
</dbReference>
<dbReference type="CDD" id="cd08962">
    <property type="entry name" value="GatD"/>
    <property type="match status" value="1"/>
</dbReference>
<dbReference type="Gene3D" id="2.30.30.520">
    <property type="match status" value="1"/>
</dbReference>
<dbReference type="Gene3D" id="3.40.50.40">
    <property type="match status" value="1"/>
</dbReference>
<dbReference type="Gene3D" id="3.40.50.1170">
    <property type="entry name" value="L-asparaginase, N-terminal domain"/>
    <property type="match status" value="1"/>
</dbReference>
<dbReference type="HAMAP" id="MF_00586">
    <property type="entry name" value="GatD"/>
    <property type="match status" value="1"/>
</dbReference>
<dbReference type="InterPro" id="IPR006033">
    <property type="entry name" value="AsnA_fam"/>
</dbReference>
<dbReference type="InterPro" id="IPR036152">
    <property type="entry name" value="Asp/glu_Ase-like_sf"/>
</dbReference>
<dbReference type="InterPro" id="IPR006034">
    <property type="entry name" value="Asparaginase/glutaminase-like"/>
</dbReference>
<dbReference type="InterPro" id="IPR027475">
    <property type="entry name" value="Asparaginase/glutaminase_AS2"/>
</dbReference>
<dbReference type="InterPro" id="IPR040919">
    <property type="entry name" value="Asparaginase_C"/>
</dbReference>
<dbReference type="InterPro" id="IPR011878">
    <property type="entry name" value="GatD"/>
</dbReference>
<dbReference type="InterPro" id="IPR040918">
    <property type="entry name" value="GatD_N"/>
</dbReference>
<dbReference type="InterPro" id="IPR037222">
    <property type="entry name" value="GatD_N_sf"/>
</dbReference>
<dbReference type="InterPro" id="IPR027473">
    <property type="entry name" value="L-asparaginase_C"/>
</dbReference>
<dbReference type="InterPro" id="IPR027474">
    <property type="entry name" value="L-asparaginase_N"/>
</dbReference>
<dbReference type="InterPro" id="IPR037152">
    <property type="entry name" value="L-asparaginase_N_sf"/>
</dbReference>
<dbReference type="NCBIfam" id="TIGR00519">
    <property type="entry name" value="asnASE_I"/>
    <property type="match status" value="1"/>
</dbReference>
<dbReference type="NCBIfam" id="TIGR02153">
    <property type="entry name" value="gatD_arch"/>
    <property type="match status" value="1"/>
</dbReference>
<dbReference type="NCBIfam" id="NF003217">
    <property type="entry name" value="PRK04183.1"/>
    <property type="match status" value="1"/>
</dbReference>
<dbReference type="PANTHER" id="PTHR11707:SF28">
    <property type="entry name" value="60 KDA LYSOPHOSPHOLIPASE"/>
    <property type="match status" value="1"/>
</dbReference>
<dbReference type="PANTHER" id="PTHR11707">
    <property type="entry name" value="L-ASPARAGINASE"/>
    <property type="match status" value="1"/>
</dbReference>
<dbReference type="Pfam" id="PF00710">
    <property type="entry name" value="Asparaginase"/>
    <property type="match status" value="1"/>
</dbReference>
<dbReference type="Pfam" id="PF17763">
    <property type="entry name" value="Asparaginase_C"/>
    <property type="match status" value="1"/>
</dbReference>
<dbReference type="Pfam" id="PF18195">
    <property type="entry name" value="GatD_N"/>
    <property type="match status" value="1"/>
</dbReference>
<dbReference type="PIRSF" id="PIRSF500175">
    <property type="entry name" value="Glu_ADT_D"/>
    <property type="match status" value="1"/>
</dbReference>
<dbReference type="PIRSF" id="PIRSF001220">
    <property type="entry name" value="L-ASNase_gatD"/>
    <property type="match status" value="1"/>
</dbReference>
<dbReference type="PRINTS" id="PR00139">
    <property type="entry name" value="ASNGLNASE"/>
</dbReference>
<dbReference type="SMART" id="SM00870">
    <property type="entry name" value="Asparaginase"/>
    <property type="match status" value="1"/>
</dbReference>
<dbReference type="SUPFAM" id="SSF141300">
    <property type="entry name" value="GatD N-terminal domain-like"/>
    <property type="match status" value="1"/>
</dbReference>
<dbReference type="SUPFAM" id="SSF53774">
    <property type="entry name" value="Glutaminase/Asparaginase"/>
    <property type="match status" value="1"/>
</dbReference>
<dbReference type="PROSITE" id="PS00917">
    <property type="entry name" value="ASN_GLN_ASE_2"/>
    <property type="match status" value="1"/>
</dbReference>
<dbReference type="PROSITE" id="PS51732">
    <property type="entry name" value="ASN_GLN_ASE_3"/>
    <property type="match status" value="1"/>
</dbReference>
<keyword id="KW-0067">ATP-binding</keyword>
<keyword id="KW-0436">Ligase</keyword>
<keyword id="KW-0547">Nucleotide-binding</keyword>
<keyword id="KW-0648">Protein biosynthesis</keyword>
<feature type="chain" id="PRO_1000212151" description="Glutamyl-tRNA(Gln) amidotransferase subunit D">
    <location>
        <begin position="1"/>
        <end position="445"/>
    </location>
</feature>
<feature type="domain" description="Asparaginase/glutaminase" evidence="2">
    <location>
        <begin position="93"/>
        <end position="425"/>
    </location>
</feature>
<feature type="active site" evidence="1">
    <location>
        <position position="103"/>
    </location>
</feature>
<feature type="active site" evidence="1">
    <location>
        <position position="179"/>
    </location>
</feature>
<feature type="active site" evidence="1">
    <location>
        <position position="180"/>
    </location>
</feature>
<feature type="active site" evidence="1">
    <location>
        <position position="258"/>
    </location>
</feature>
<protein>
    <recommendedName>
        <fullName evidence="1">Glutamyl-tRNA(Gln) amidotransferase subunit D</fullName>
        <shortName evidence="1">Glu-ADT subunit D</shortName>
        <ecNumber evidence="1">6.3.5.-</ecNumber>
    </recommendedName>
</protein>
<evidence type="ECO:0000255" key="1">
    <source>
        <dbReference type="HAMAP-Rule" id="MF_00586"/>
    </source>
</evidence>
<evidence type="ECO:0000255" key="2">
    <source>
        <dbReference type="PROSITE-ProRule" id="PRU01068"/>
    </source>
</evidence>
<organism>
    <name type="scientific">Saccharolobus islandicus (strain L.S.2.15 / Lassen #1)</name>
    <name type="common">Sulfolobus islandicus</name>
    <dbReference type="NCBI Taxonomy" id="429572"/>
    <lineage>
        <taxon>Archaea</taxon>
        <taxon>Thermoproteota</taxon>
        <taxon>Thermoprotei</taxon>
        <taxon>Sulfolobales</taxon>
        <taxon>Sulfolobaceae</taxon>
        <taxon>Saccharolobus</taxon>
    </lineage>
</organism>
<sequence>MQENYKAKAYDILKNLNIEEGDLIEIKKGDLRIRGILLPSYSKDERIFVIKLDNGYNIGISIDNISEIKLITKNSSKAQESERKEVSRNGAKSEIKIISTGGTIVSKVEYETGAVRPALTTEEIVQFLPEINEIAKVDAEVLFSILSENMKPEYWVKIAESVKKAFGEGNTGVVIAHGTDTMAYTASALAFSLRSLQGPVVLVGSQRSSDRPSSDSAINLLSAVTTAKYAPFGEVVVNMHADSSDTYALVHRGVKVRKMHSSRRDAFQSVNDKPLAKVLWKERKLVMLDKSYMSKKGETTLDAKFDNRAFLLYYYPGLDRDFLEHILTNTKIRGLIIAGTGLGHTSSDYVELFRKATKDGIFIGMTTQCLFGRVNMNVYTTGRQLLDAGVTPLEDMLPEVALVKLMWVLAHEQDLEKIRSLMISNLVGEINPRHTLDLFPRWSYE</sequence>